<dbReference type="EMBL" id="AY358024">
    <property type="protein sequence ID" value="AAQ55253.1"/>
    <property type="molecule type" value="Genomic_RNA"/>
</dbReference>
<dbReference type="EMBL" id="AY216504">
    <property type="protein sequence ID" value="ABY59835.1"/>
    <property type="molecule type" value="Genomic_RNA"/>
</dbReference>
<dbReference type="RefSeq" id="NP_899220.1">
    <property type="nucleotide sequence ID" value="NC_005082.1"/>
</dbReference>
<dbReference type="SMR" id="Q6UY71"/>
<dbReference type="IntAct" id="Q6UY71">
    <property type="interactions" value="1"/>
</dbReference>
<dbReference type="KEGG" id="vg:2943172"/>
<dbReference type="OrthoDB" id="23344at10239"/>
<dbReference type="Proteomes" id="UP000147629">
    <property type="component" value="Genome"/>
</dbReference>
<dbReference type="GO" id="GO:0044220">
    <property type="term" value="C:host cell perinuclear region of cytoplasm"/>
    <property type="evidence" value="ECO:0007669"/>
    <property type="project" value="UniProtKB-SubCell"/>
</dbReference>
<dbReference type="GO" id="GO:0020002">
    <property type="term" value="C:host cell plasma membrane"/>
    <property type="evidence" value="ECO:0007669"/>
    <property type="project" value="UniProtKB-SubCell"/>
</dbReference>
<dbReference type="GO" id="GO:0016020">
    <property type="term" value="C:membrane"/>
    <property type="evidence" value="ECO:0007669"/>
    <property type="project" value="UniProtKB-UniRule"/>
</dbReference>
<dbReference type="GO" id="GO:0044423">
    <property type="term" value="C:virion component"/>
    <property type="evidence" value="ECO:0007669"/>
    <property type="project" value="UniProtKB-UniRule"/>
</dbReference>
<dbReference type="GO" id="GO:0003723">
    <property type="term" value="F:RNA binding"/>
    <property type="evidence" value="ECO:0007669"/>
    <property type="project" value="UniProtKB-UniRule"/>
</dbReference>
<dbReference type="GO" id="GO:0008270">
    <property type="term" value="F:zinc ion binding"/>
    <property type="evidence" value="ECO:0007669"/>
    <property type="project" value="UniProtKB-UniRule"/>
</dbReference>
<dbReference type="GO" id="GO:0039540">
    <property type="term" value="P:symbiont-mediated suppression of host cytoplasmic pattern recognition receptor signaling pathway via inhibition of RIG-I activity"/>
    <property type="evidence" value="ECO:0000269"/>
    <property type="project" value="SigSci"/>
</dbReference>
<dbReference type="GO" id="GO:0046761">
    <property type="term" value="P:viral budding from plasma membrane"/>
    <property type="evidence" value="ECO:0007669"/>
    <property type="project" value="UniProtKB-UniRule"/>
</dbReference>
<dbReference type="GO" id="GO:0039702">
    <property type="term" value="P:viral budding via host ESCRT complex"/>
    <property type="evidence" value="ECO:0007669"/>
    <property type="project" value="UniProtKB-UniRule"/>
</dbReference>
<dbReference type="Gene3D" id="3.30.160.310">
    <property type="match status" value="1"/>
</dbReference>
<dbReference type="HAMAP" id="MF_04087">
    <property type="entry name" value="ARENA_Z"/>
    <property type="match status" value="1"/>
</dbReference>
<dbReference type="InterPro" id="IPR024183">
    <property type="entry name" value="RING_finger_Z_arenaviridae"/>
</dbReference>
<dbReference type="InterPro" id="IPR038485">
    <property type="entry name" value="Z_RING-type_Znf_sf"/>
</dbReference>
<dbReference type="InterPro" id="IPR003224">
    <property type="entry name" value="Z_RING_Znf"/>
</dbReference>
<dbReference type="Pfam" id="PF03854">
    <property type="entry name" value="zf-P11"/>
    <property type="match status" value="1"/>
</dbReference>
<dbReference type="PIRSF" id="PIRSF004030">
    <property type="entry name" value="Z_ArenaV"/>
    <property type="match status" value="1"/>
</dbReference>
<keyword id="KW-1032">Host cell membrane</keyword>
<keyword id="KW-1035">Host cytoplasm</keyword>
<keyword id="KW-1043">Host membrane</keyword>
<keyword id="KW-0945">Host-virus interaction</keyword>
<keyword id="KW-0449">Lipoprotein</keyword>
<keyword id="KW-0472">Membrane</keyword>
<keyword id="KW-0479">Metal-binding</keyword>
<keyword id="KW-0519">Myristate</keyword>
<keyword id="KW-1198">Viral budding</keyword>
<keyword id="KW-1187">Viral budding via the host ESCRT complexes</keyword>
<keyword id="KW-1188">Viral release from host cell</keyword>
<keyword id="KW-0946">Virion</keyword>
<keyword id="KW-0862">Zinc</keyword>
<keyword id="KW-0863">Zinc-finger</keyword>
<proteinExistence type="evidence at protein level"/>
<comment type="function">
    <text evidence="1 2">Plays a crucial role in virion assembly and budding. Expressed late in the virus life cycle, it acts as an inhibitor of viral transcription and RNA synthesis by interacting with the viral polymerase L. Presumably recruits the NP encapsidated genome to cellular membranes at budding sites via direct interaction with NP. Plays critical roles in the final steps of viral release by interacting with host TSG101, a member of the vacuolar protein-sorting pathway and using other cellular host proteins involved in vesicle formation pathway. The budding of the virus progeny occurs after association of protein Z with the viral glycoprotein complex SSP-GP1-GP2 at the cell periphery, step that requires myristoylation of protein Z. Also selectively represses protein production by associating with host eIF4E (By similarity). In cell-based minigenome assay, has an inhibitory effect on the ribonucleoprotein machinery (vRNP), which is responsible for the replication and transcription of the viral genome (By similarity).</text>
</comment>
<comment type="subunit">
    <text evidence="2">Interacts with protein NP; this interaction probably directs the encapsidated genome to budding sites. Interacts (via RING domain) with polymerase L; this interaction inhibits viral transcription and replication, Z partially blocks the product exit tunnel for the releasing nascent RNA product. Interacts with the glycoprotein complex; this interaction plays a role in virion budding. Interacts with host eIF4E; this interaction results in eIF4E reduced affinity for its substrate, the 5'-m7 G cap structure. Interacts (via late-budding domain) with host TSG101; this interaction is essential for budding and release of viral particles. Interacts with host RPLP0; this interaction may serve to load ribosome-like particles inside the virion. Interacts with host PML; this interaction induces PML bodies redistribution in the cytoplasm upon viral infection.</text>
</comment>
<comment type="interaction">
    <interactant intactId="EBI-3647448">
        <id>Q6UY71</id>
    </interactant>
    <interactant intactId="EBI-995350">
        <id>O95786</id>
        <label>RIGI</label>
    </interactant>
    <organismsDiffer>true</organismsDiffer>
    <experiments>3</experiments>
</comment>
<comment type="subcellular location">
    <subcellularLocation>
        <location evidence="2">Virion</location>
    </subcellularLocation>
    <subcellularLocation>
        <location evidence="2">Host cytoplasm</location>
        <location evidence="2">Host perinuclear region</location>
    </subcellularLocation>
    <subcellularLocation>
        <location evidence="2">Host cell membrane</location>
        <topology evidence="2">Lipid-anchor</topology>
        <orientation evidence="2">Cytoplasmic side</orientation>
    </subcellularLocation>
    <text evidence="2">Mainly perinuclear. During budding, associates at the inner side of the plasma membrane of infected cells.</text>
</comment>
<comment type="domain">
    <text evidence="2">Late-budding domains (L domains) are short sequence motifs essential for viral particle budding. They recruit proteins of the host ESCRT machinery (Endosomal Sorting Complex Required for Transport) or ESCRT-associated proteins.</text>
</comment>
<comment type="PTM">
    <text evidence="1">Myristoylation is required for the role of RING finger protein Z in assembly and budding.</text>
</comment>
<comment type="similarity">
    <text>Belongs to the arenaviridae Z protein family.</text>
</comment>
<protein>
    <recommendedName>
        <fullName evidence="2">RING finger protein Z</fullName>
        <shortName evidence="2">Protein Z</shortName>
    </recommendedName>
    <alternativeName>
        <fullName evidence="2">Zinc-binding protein</fullName>
    </alternativeName>
</protein>
<name>Z_GTOVV</name>
<organism>
    <name type="scientific">Guanarito mammarenavirus (isolate Human/Venezuela/NH-95551/1990)</name>
    <name type="common">GTOV</name>
    <dbReference type="NCBI Taxonomy" id="3052307"/>
    <lineage>
        <taxon>Viruses</taxon>
        <taxon>Riboviria</taxon>
        <taxon>Orthornavirae</taxon>
        <taxon>Negarnaviricota</taxon>
        <taxon>Polyploviricotina</taxon>
        <taxon>Ellioviricetes</taxon>
        <taxon>Bunyavirales</taxon>
        <taxon>Arenaviridae</taxon>
        <taxon>Mammarenavirus</taxon>
    </lineage>
</organism>
<organismHost>
    <name type="scientific">Homo sapiens</name>
    <name type="common">Human</name>
    <dbReference type="NCBI Taxonomy" id="9606"/>
</organismHost>
<organismHost>
    <name type="scientific">Zygodontomys brevicauda</name>
    <dbReference type="NCBI Taxonomy" id="157541"/>
</organismHost>
<feature type="initiator methionine" description="Removed; by host" evidence="2">
    <location>
        <position position="1"/>
    </location>
</feature>
<feature type="chain" id="PRO_0000361031" description="RING finger protein Z" evidence="2">
    <location>
        <begin position="2"/>
        <end position="95"/>
    </location>
</feature>
<feature type="zinc finger region" description="RING-type; atypical" evidence="2">
    <location>
        <begin position="40"/>
        <end position="76"/>
    </location>
</feature>
<feature type="region of interest" description="Disordered" evidence="3">
    <location>
        <begin position="1"/>
        <end position="23"/>
    </location>
</feature>
<feature type="short sequence motif" description="PTAP/PSAP motif" evidence="2">
    <location>
        <begin position="90"/>
        <end position="93"/>
    </location>
</feature>
<feature type="compositionally biased region" description="Low complexity" evidence="3">
    <location>
        <begin position="1"/>
        <end position="16"/>
    </location>
</feature>
<feature type="lipid moiety-binding region" description="N-myristoyl glycine; by host" evidence="2">
    <location>
        <position position="2"/>
    </location>
</feature>
<gene>
    <name evidence="2" type="primary">Z</name>
</gene>
<reference key="1">
    <citation type="submission" date="2003-08" db="EMBL/GenBank/DDBJ databases">
        <authorList>
            <person name="Bowen M.D."/>
            <person name="Thurman K."/>
            <person name="Minor E."/>
            <person name="Meyer R.F."/>
            <person name="Malfatti S.A."/>
            <person name="Do L.H."/>
            <person name="Smith K.L."/>
            <person name="McCready P.M."/>
            <person name="Chain P.S.G."/>
        </authorList>
    </citation>
    <scope>NUCLEOTIDE SEQUENCE [GENOMIC RNA]</scope>
</reference>
<reference key="2">
    <citation type="journal article" date="2003" name="Virology">
        <title>New insights into the evolutionary relationships between arenaviruses provided by comparative analysis of small and large segment sequences.</title>
        <authorList>
            <person name="Charrel R.N."/>
            <person name="Lemasson J.J."/>
            <person name="Garbutt M."/>
            <person name="Khelifa R."/>
            <person name="De Micco P."/>
            <person name="Feldmann H."/>
            <person name="de Lamballerie X."/>
        </authorList>
    </citation>
    <scope>NUCLEOTIDE SEQUENCE [GENOMIC RNA]</scope>
</reference>
<reference key="3">
    <citation type="journal article" date="2008" name="Curr. Opin. Microbiol.">
        <title>Phylogeny of the genus Arenavirus.</title>
        <authorList>
            <person name="Charrel R.N."/>
            <person name="de Lamballerie X."/>
            <person name="Emonet S."/>
        </authorList>
    </citation>
    <scope>NUCLEOTIDE SEQUENCE [GENOMIC RNA]</scope>
</reference>
<sequence length="95" mass="10677">MGNSKSKSNPSSSSESQKGAPTVTEFRRTAIHSLYGRYNCKCCWFADKNLIKCSDHYLCLRCLNVMLKNSDLCNICWEQLPTCITVPEEPSAPPE</sequence>
<evidence type="ECO:0000250" key="1">
    <source>
        <dbReference type="UniProtKB" id="P18541"/>
    </source>
</evidence>
<evidence type="ECO:0000255" key="2">
    <source>
        <dbReference type="HAMAP-Rule" id="MF_04087"/>
    </source>
</evidence>
<evidence type="ECO:0000256" key="3">
    <source>
        <dbReference type="SAM" id="MobiDB-lite"/>
    </source>
</evidence>
<accession>Q6UY71</accession>